<evidence type="ECO:0000255" key="1">
    <source>
        <dbReference type="HAMAP-Rule" id="MF_01401"/>
    </source>
</evidence>
<accession>B2VHZ5</accession>
<comment type="function">
    <text evidence="1">Has an important function as a repair enzyme for proteins that have been inactivated by oxidation. Catalyzes the reversible oxidation-reduction of methionine sulfoxide in proteins to methionine.</text>
</comment>
<comment type="catalytic activity">
    <reaction evidence="1">
        <text>L-methionyl-[protein] + [thioredoxin]-disulfide + H2O = L-methionyl-(S)-S-oxide-[protein] + [thioredoxin]-dithiol</text>
        <dbReference type="Rhea" id="RHEA:14217"/>
        <dbReference type="Rhea" id="RHEA-COMP:10698"/>
        <dbReference type="Rhea" id="RHEA-COMP:10700"/>
        <dbReference type="Rhea" id="RHEA-COMP:12313"/>
        <dbReference type="Rhea" id="RHEA-COMP:12315"/>
        <dbReference type="ChEBI" id="CHEBI:15377"/>
        <dbReference type="ChEBI" id="CHEBI:16044"/>
        <dbReference type="ChEBI" id="CHEBI:29950"/>
        <dbReference type="ChEBI" id="CHEBI:44120"/>
        <dbReference type="ChEBI" id="CHEBI:50058"/>
        <dbReference type="EC" id="1.8.4.11"/>
    </reaction>
</comment>
<comment type="catalytic activity">
    <reaction evidence="1">
        <text>[thioredoxin]-disulfide + L-methionine + H2O = L-methionine (S)-S-oxide + [thioredoxin]-dithiol</text>
        <dbReference type="Rhea" id="RHEA:19993"/>
        <dbReference type="Rhea" id="RHEA-COMP:10698"/>
        <dbReference type="Rhea" id="RHEA-COMP:10700"/>
        <dbReference type="ChEBI" id="CHEBI:15377"/>
        <dbReference type="ChEBI" id="CHEBI:29950"/>
        <dbReference type="ChEBI" id="CHEBI:50058"/>
        <dbReference type="ChEBI" id="CHEBI:57844"/>
        <dbReference type="ChEBI" id="CHEBI:58772"/>
        <dbReference type="EC" id="1.8.4.11"/>
    </reaction>
</comment>
<comment type="similarity">
    <text evidence="1">Belongs to the MsrA Met sulfoxide reductase family.</text>
</comment>
<organism>
    <name type="scientific">Erwinia tasmaniensis (strain DSM 17950 / CFBP 7177 / CIP 109463 / NCPPB 4357 / Et1/99)</name>
    <dbReference type="NCBI Taxonomy" id="465817"/>
    <lineage>
        <taxon>Bacteria</taxon>
        <taxon>Pseudomonadati</taxon>
        <taxon>Pseudomonadota</taxon>
        <taxon>Gammaproteobacteria</taxon>
        <taxon>Enterobacterales</taxon>
        <taxon>Erwiniaceae</taxon>
        <taxon>Erwinia</taxon>
    </lineage>
</organism>
<feature type="chain" id="PRO_1000145407" description="Peptide methionine sulfoxide reductase MsrA">
    <location>
        <begin position="1"/>
        <end position="178"/>
    </location>
</feature>
<feature type="active site" evidence="1">
    <location>
        <position position="12"/>
    </location>
</feature>
<keyword id="KW-0560">Oxidoreductase</keyword>
<keyword id="KW-1185">Reference proteome</keyword>
<gene>
    <name evidence="1" type="primary">msrA</name>
    <name type="ordered locus">ETA_07790</name>
</gene>
<name>MSRA_ERWT9</name>
<reference key="1">
    <citation type="journal article" date="2008" name="Environ. Microbiol.">
        <title>The genome of Erwinia tasmaniensis strain Et1/99, a non-pathogenic bacterium in the genus Erwinia.</title>
        <authorList>
            <person name="Kube M."/>
            <person name="Migdoll A.M."/>
            <person name="Mueller I."/>
            <person name="Kuhl H."/>
            <person name="Beck A."/>
            <person name="Reinhardt R."/>
            <person name="Geider K."/>
        </authorList>
    </citation>
    <scope>NUCLEOTIDE SEQUENCE [LARGE SCALE GENOMIC DNA]</scope>
    <source>
        <strain>DSM 17950 / CFBP 7177 / CIP 109463 / NCPPB 4357 / Et1/99</strain>
    </source>
</reference>
<proteinExistence type="inferred from homology"/>
<protein>
    <recommendedName>
        <fullName evidence="1">Peptide methionine sulfoxide reductase MsrA</fullName>
        <shortName evidence="1">Protein-methionine-S-oxide reductase</shortName>
        <ecNumber evidence="1">1.8.4.11</ecNumber>
    </recommendedName>
    <alternativeName>
        <fullName evidence="1">Peptide-methionine (S)-S-oxide reductase</fullName>
        <shortName evidence="1">Peptide Met(O) reductase</shortName>
    </alternativeName>
</protein>
<sequence length="178" mass="19683">MATEYAIIAGGCFWCTEAVFKQIHGVVSVESGYIGGHTENPTYKQVCGGDTGHAEAIRIGFDPEKVSFGDLLDISFATHDPTQLNRQGNDIGTQYRSAIFPVSEEQLEEAKMAIARAQSEHNDAIVTTIEAHSTWYPAEDYHQDYWAGEGQGNRYCLAVIPPKLQKLHKRFAAYTAPE</sequence>
<dbReference type="EC" id="1.8.4.11" evidence="1"/>
<dbReference type="EMBL" id="CU468135">
    <property type="protein sequence ID" value="CAO95825.1"/>
    <property type="molecule type" value="Genomic_DNA"/>
</dbReference>
<dbReference type="RefSeq" id="WP_012440527.1">
    <property type="nucleotide sequence ID" value="NC_010694.1"/>
</dbReference>
<dbReference type="SMR" id="B2VHZ5"/>
<dbReference type="STRING" id="465817.ETA_07790"/>
<dbReference type="KEGG" id="eta:ETA_07790"/>
<dbReference type="eggNOG" id="COG0225">
    <property type="taxonomic scope" value="Bacteria"/>
</dbReference>
<dbReference type="HOGENOM" id="CLU_031040_10_0_6"/>
<dbReference type="OrthoDB" id="4174719at2"/>
<dbReference type="Proteomes" id="UP000001726">
    <property type="component" value="Chromosome"/>
</dbReference>
<dbReference type="GO" id="GO:0033744">
    <property type="term" value="F:L-methionine:thioredoxin-disulfide S-oxidoreductase activity"/>
    <property type="evidence" value="ECO:0007669"/>
    <property type="project" value="RHEA"/>
</dbReference>
<dbReference type="GO" id="GO:0008113">
    <property type="term" value="F:peptide-methionine (S)-S-oxide reductase activity"/>
    <property type="evidence" value="ECO:0007669"/>
    <property type="project" value="UniProtKB-UniRule"/>
</dbReference>
<dbReference type="GO" id="GO:0036211">
    <property type="term" value="P:protein modification process"/>
    <property type="evidence" value="ECO:0007669"/>
    <property type="project" value="UniProtKB-UniRule"/>
</dbReference>
<dbReference type="Gene3D" id="3.30.1060.10">
    <property type="entry name" value="Peptide methionine sulphoxide reductase MsrA"/>
    <property type="match status" value="1"/>
</dbReference>
<dbReference type="HAMAP" id="MF_01401">
    <property type="entry name" value="MsrA"/>
    <property type="match status" value="1"/>
</dbReference>
<dbReference type="InterPro" id="IPR002569">
    <property type="entry name" value="Met_Sox_Rdtase_MsrA_dom"/>
</dbReference>
<dbReference type="InterPro" id="IPR036509">
    <property type="entry name" value="Met_Sox_Rdtase_MsrA_sf"/>
</dbReference>
<dbReference type="NCBIfam" id="TIGR00401">
    <property type="entry name" value="msrA"/>
    <property type="match status" value="1"/>
</dbReference>
<dbReference type="PANTHER" id="PTHR43774">
    <property type="entry name" value="PEPTIDE METHIONINE SULFOXIDE REDUCTASE"/>
    <property type="match status" value="1"/>
</dbReference>
<dbReference type="PANTHER" id="PTHR43774:SF1">
    <property type="entry name" value="PEPTIDE METHIONINE SULFOXIDE REDUCTASE MSRA 2"/>
    <property type="match status" value="1"/>
</dbReference>
<dbReference type="Pfam" id="PF01625">
    <property type="entry name" value="PMSR"/>
    <property type="match status" value="1"/>
</dbReference>
<dbReference type="SUPFAM" id="SSF55068">
    <property type="entry name" value="Peptide methionine sulfoxide reductase"/>
    <property type="match status" value="1"/>
</dbReference>